<sequence length="369" mass="39974">MNSELKPGLDLLGDPIVLTQRLVDIPSPSGQEKQIADEIEDALRNLNLPGVEVFRFNNNVLARTNRGLASRVMLAGHIDTVPIADNLPSRVEDGIMYGCGTVDMKSGLAVYLHTFATLATSTELKHDLTLIAYECEEVADHLNGLGHIRDEHPEWLAADLALLGEPTGGWIEAGCQGNLRIKVTAHGVRAHSARSWLGDNAMHKLSPIISKVAAYKAAEVNIDGLTYREGLNIVFCESGVANNVIPDLAWMNLNFRFAPNRDLNEAIEHVVETLELDGQDGIEWAVEDGAGGALPGLGQQVTSGLIDAVGREKIRAKFGWTDVSRFSAMGIPALNFGAGDPSFAHKRDEQCPVEQITDVAAILKQYLSE</sequence>
<organism>
    <name type="scientific">Corynebacterium glutamicum (strain ATCC 13032 / DSM 20300 / JCM 1318 / BCRC 11384 / CCUG 27702 / LMG 3730 / NBRC 12168 / NCIMB 10025 / NRRL B-2784 / 534)</name>
    <dbReference type="NCBI Taxonomy" id="196627"/>
    <lineage>
        <taxon>Bacteria</taxon>
        <taxon>Bacillati</taxon>
        <taxon>Actinomycetota</taxon>
        <taxon>Actinomycetes</taxon>
        <taxon>Mycobacteriales</taxon>
        <taxon>Corynebacteriaceae</taxon>
        <taxon>Corynebacterium</taxon>
    </lineage>
</organism>
<keyword id="KW-0002">3D-structure</keyword>
<keyword id="KW-0028">Amino-acid biosynthesis</keyword>
<keyword id="KW-0170">Cobalt</keyword>
<keyword id="KW-0220">Diaminopimelate biosynthesis</keyword>
<keyword id="KW-0378">Hydrolase</keyword>
<keyword id="KW-0457">Lysine biosynthesis</keyword>
<keyword id="KW-0479">Metal-binding</keyword>
<keyword id="KW-1185">Reference proteome</keyword>
<keyword id="KW-0862">Zinc</keyword>
<protein>
    <recommendedName>
        <fullName>Succinyl-diaminopimelate desuccinylase</fullName>
        <shortName>SDAP desuccinylase</shortName>
        <ecNumber>3.5.1.18</ecNumber>
    </recommendedName>
</protein>
<feature type="chain" id="PRO_0000185260" description="Succinyl-diaminopimelate desuccinylase">
    <location>
        <begin position="1"/>
        <end position="369"/>
    </location>
</feature>
<feature type="active site" evidence="1">
    <location>
        <position position="79"/>
    </location>
</feature>
<feature type="active site" description="Proton acceptor" evidence="1">
    <location>
        <position position="136"/>
    </location>
</feature>
<feature type="binding site" evidence="1">
    <location>
        <position position="77"/>
    </location>
    <ligand>
        <name>Zn(2+)</name>
        <dbReference type="ChEBI" id="CHEBI:29105"/>
        <label>1</label>
    </ligand>
</feature>
<feature type="binding site" evidence="1">
    <location>
        <position position="103"/>
    </location>
    <ligand>
        <name>Zn(2+)</name>
        <dbReference type="ChEBI" id="CHEBI:29105"/>
        <label>1</label>
    </ligand>
</feature>
<feature type="binding site" evidence="1">
    <location>
        <position position="103"/>
    </location>
    <ligand>
        <name>Zn(2+)</name>
        <dbReference type="ChEBI" id="CHEBI:29105"/>
        <label>2</label>
    </ligand>
</feature>
<feature type="binding site" evidence="1">
    <location>
        <position position="137"/>
    </location>
    <ligand>
        <name>Zn(2+)</name>
        <dbReference type="ChEBI" id="CHEBI:29105"/>
        <label>2</label>
    </ligand>
</feature>
<feature type="binding site" evidence="1">
    <location>
        <position position="165"/>
    </location>
    <ligand>
        <name>Zn(2+)</name>
        <dbReference type="ChEBI" id="CHEBI:29105"/>
        <label>1</label>
    </ligand>
</feature>
<feature type="binding site" evidence="1">
    <location>
        <position position="345"/>
    </location>
    <ligand>
        <name>Zn(2+)</name>
        <dbReference type="ChEBI" id="CHEBI:29105"/>
        <label>2</label>
    </ligand>
</feature>
<feature type="helix" evidence="3">
    <location>
        <begin position="15"/>
        <end position="23"/>
    </location>
</feature>
<feature type="helix" evidence="3">
    <location>
        <begin position="33"/>
        <end position="44"/>
    </location>
</feature>
<feature type="turn" evidence="3">
    <location>
        <begin position="45"/>
        <end position="47"/>
    </location>
</feature>
<feature type="strand" evidence="3">
    <location>
        <begin position="52"/>
        <end position="56"/>
    </location>
</feature>
<feature type="strand" evidence="3">
    <location>
        <begin position="59"/>
        <end position="63"/>
    </location>
</feature>
<feature type="strand" evidence="3">
    <location>
        <begin position="71"/>
        <end position="77"/>
    </location>
</feature>
<feature type="strand" evidence="3">
    <location>
        <begin position="93"/>
        <end position="100"/>
    </location>
</feature>
<feature type="turn" evidence="3">
    <location>
        <begin position="101"/>
        <end position="104"/>
    </location>
</feature>
<feature type="helix" evidence="3">
    <location>
        <begin position="105"/>
        <end position="118"/>
    </location>
</feature>
<feature type="strand" evidence="3">
    <location>
        <begin position="126"/>
        <end position="133"/>
    </location>
</feature>
<feature type="helix" evidence="3">
    <location>
        <begin position="144"/>
        <end position="151"/>
    </location>
</feature>
<feature type="helix" evidence="3">
    <location>
        <begin position="153"/>
        <end position="156"/>
    </location>
</feature>
<feature type="strand" evidence="3">
    <location>
        <begin position="159"/>
        <end position="163"/>
    </location>
</feature>
<feature type="strand" evidence="3">
    <location>
        <begin position="171"/>
        <end position="175"/>
    </location>
</feature>
<feature type="strand" evidence="3">
    <location>
        <begin position="177"/>
        <end position="186"/>
    </location>
</feature>
<feature type="helix" evidence="3">
    <location>
        <begin position="195"/>
        <end position="197"/>
    </location>
</feature>
<feature type="helix" evidence="3">
    <location>
        <begin position="202"/>
        <end position="205"/>
    </location>
</feature>
<feature type="helix" evidence="3">
    <location>
        <begin position="206"/>
        <end position="214"/>
    </location>
</feature>
<feature type="strand" evidence="3">
    <location>
        <begin position="219"/>
        <end position="222"/>
    </location>
</feature>
<feature type="strand" evidence="3">
    <location>
        <begin position="225"/>
        <end position="228"/>
    </location>
</feature>
<feature type="strand" evidence="3">
    <location>
        <begin position="230"/>
        <end position="238"/>
    </location>
</feature>
<feature type="strand" evidence="3">
    <location>
        <begin position="247"/>
        <end position="257"/>
    </location>
</feature>
<feature type="helix" evidence="3">
    <location>
        <begin position="263"/>
        <end position="273"/>
    </location>
</feature>
<feature type="turn" evidence="3">
    <location>
        <begin position="274"/>
        <end position="278"/>
    </location>
</feature>
<feature type="strand" evidence="3">
    <location>
        <begin position="282"/>
        <end position="290"/>
    </location>
</feature>
<feature type="helix" evidence="3">
    <location>
        <begin position="300"/>
        <end position="309"/>
    </location>
</feature>
<feature type="helix" evidence="3">
    <location>
        <begin position="311"/>
        <end position="313"/>
    </location>
</feature>
<feature type="strand" evidence="3">
    <location>
        <begin position="314"/>
        <end position="316"/>
    </location>
</feature>
<feature type="helix" evidence="3">
    <location>
        <begin position="323"/>
        <end position="327"/>
    </location>
</feature>
<feature type="turn" evidence="3">
    <location>
        <begin position="328"/>
        <end position="330"/>
    </location>
</feature>
<feature type="strand" evidence="3">
    <location>
        <begin position="333"/>
        <end position="336"/>
    </location>
</feature>
<feature type="strand" evidence="3">
    <location>
        <begin position="341"/>
        <end position="345"/>
    </location>
</feature>
<feature type="strand" evidence="3">
    <location>
        <begin position="350"/>
        <end position="352"/>
    </location>
</feature>
<feature type="helix" evidence="3">
    <location>
        <begin position="353"/>
        <end position="368"/>
    </location>
</feature>
<accession>Q59284</accession>
<accession>Q46066</accession>
<name>DAPE_CORGL</name>
<gene>
    <name type="primary">dapE</name>
    <name type="ordered locus">Cgl1109</name>
    <name type="ordered locus">cg1260</name>
</gene>
<evidence type="ECO:0000250" key="1"/>
<evidence type="ECO:0000305" key="2"/>
<evidence type="ECO:0007829" key="3">
    <source>
        <dbReference type="PDB" id="3TX8"/>
    </source>
</evidence>
<proteinExistence type="evidence at protein level"/>
<comment type="catalytic activity">
    <reaction>
        <text>N-succinyl-(2S,6S)-2,6-diaminopimelate + H2O = (2S,6S)-2,6-diaminopimelate + succinate</text>
        <dbReference type="Rhea" id="RHEA:22608"/>
        <dbReference type="ChEBI" id="CHEBI:15377"/>
        <dbReference type="ChEBI" id="CHEBI:30031"/>
        <dbReference type="ChEBI" id="CHEBI:57609"/>
        <dbReference type="ChEBI" id="CHEBI:58087"/>
        <dbReference type="EC" id="3.5.1.18"/>
    </reaction>
</comment>
<comment type="cofactor">
    <cofactor>
        <name>Zn(2+)</name>
        <dbReference type="ChEBI" id="CHEBI:29105"/>
    </cofactor>
    <cofactor>
        <name>Co(2+)</name>
        <dbReference type="ChEBI" id="CHEBI:48828"/>
    </cofactor>
    <text>Binds 2 Zn(2+) or Co(2+) ions per subunit.</text>
</comment>
<comment type="pathway">
    <text>Amino-acid biosynthesis; L-lysine biosynthesis via DAP pathway; LL-2,6-diaminopimelate from (S)-tetrahydrodipicolinate (succinylase route): step 3/3.</text>
</comment>
<comment type="similarity">
    <text evidence="2">Belongs to the peptidase M20A family.</text>
</comment>
<dbReference type="EC" id="3.5.1.18"/>
<dbReference type="EMBL" id="X81379">
    <property type="protein sequence ID" value="CAA57141.1"/>
    <property type="molecule type" value="Genomic_DNA"/>
</dbReference>
<dbReference type="EMBL" id="BA000036">
    <property type="protein sequence ID" value="BAB98502.1"/>
    <property type="molecule type" value="Genomic_DNA"/>
</dbReference>
<dbReference type="EMBL" id="BX927151">
    <property type="protein sequence ID" value="CAF19815.1"/>
    <property type="molecule type" value="Genomic_DNA"/>
</dbReference>
<dbReference type="EMBL" id="X85965">
    <property type="protein sequence ID" value="CAA59951.1"/>
    <property type="molecule type" value="Genomic_DNA"/>
</dbReference>
<dbReference type="PIR" id="S60063">
    <property type="entry name" value="S60063"/>
</dbReference>
<dbReference type="RefSeq" id="NP_600337.1">
    <property type="nucleotide sequence ID" value="NC_003450.3"/>
</dbReference>
<dbReference type="RefSeq" id="WP_011014127.1">
    <property type="nucleotide sequence ID" value="NC_006958.1"/>
</dbReference>
<dbReference type="PDB" id="3TX8">
    <property type="method" value="X-ray"/>
    <property type="resolution" value="2.97 A"/>
    <property type="chains" value="A=5-369"/>
</dbReference>
<dbReference type="PDBsum" id="3TX8"/>
<dbReference type="SMR" id="Q59284"/>
<dbReference type="STRING" id="196627.cg1260"/>
<dbReference type="GeneID" id="1019094"/>
<dbReference type="KEGG" id="cgb:cg1260"/>
<dbReference type="KEGG" id="cgl:Cgl1109"/>
<dbReference type="PATRIC" id="fig|196627.13.peg.1088"/>
<dbReference type="eggNOG" id="COG0624">
    <property type="taxonomic scope" value="Bacteria"/>
</dbReference>
<dbReference type="HOGENOM" id="CLU_021802_1_0_11"/>
<dbReference type="OrthoDB" id="7055905at2"/>
<dbReference type="BioCyc" id="CORYNE:G18NG-10681-MONOMER"/>
<dbReference type="BRENDA" id="3.5.1.18">
    <property type="organism ID" value="960"/>
</dbReference>
<dbReference type="UniPathway" id="UPA00034">
    <property type="reaction ID" value="UER00021"/>
</dbReference>
<dbReference type="EvolutionaryTrace" id="Q59284"/>
<dbReference type="Proteomes" id="UP000000582">
    <property type="component" value="Chromosome"/>
</dbReference>
<dbReference type="Proteomes" id="UP000001009">
    <property type="component" value="Chromosome"/>
</dbReference>
<dbReference type="GO" id="GO:0008777">
    <property type="term" value="F:acetylornithine deacetylase activity"/>
    <property type="evidence" value="ECO:0007669"/>
    <property type="project" value="TreeGrafter"/>
</dbReference>
<dbReference type="GO" id="GO:0046872">
    <property type="term" value="F:metal ion binding"/>
    <property type="evidence" value="ECO:0007669"/>
    <property type="project" value="UniProtKB-KW"/>
</dbReference>
<dbReference type="GO" id="GO:0009014">
    <property type="term" value="F:succinyl-diaminopimelate desuccinylase activity"/>
    <property type="evidence" value="ECO:0007669"/>
    <property type="project" value="UniProtKB-EC"/>
</dbReference>
<dbReference type="GO" id="GO:0019877">
    <property type="term" value="P:diaminopimelate biosynthetic process"/>
    <property type="evidence" value="ECO:0007669"/>
    <property type="project" value="UniProtKB-KW"/>
</dbReference>
<dbReference type="GO" id="GO:0006526">
    <property type="term" value="P:L-arginine biosynthetic process"/>
    <property type="evidence" value="ECO:0007669"/>
    <property type="project" value="TreeGrafter"/>
</dbReference>
<dbReference type="GO" id="GO:0009089">
    <property type="term" value="P:lysine biosynthetic process via diaminopimelate"/>
    <property type="evidence" value="ECO:0007669"/>
    <property type="project" value="UniProtKB-UniPathway"/>
</dbReference>
<dbReference type="CDD" id="cd05647">
    <property type="entry name" value="M20_DapE_actinobac"/>
    <property type="match status" value="1"/>
</dbReference>
<dbReference type="FunFam" id="3.40.630.10:FF:000034">
    <property type="entry name" value="Succinyl-diaminopimelate desuccinylase"/>
    <property type="match status" value="1"/>
</dbReference>
<dbReference type="Gene3D" id="3.30.70.360">
    <property type="match status" value="1"/>
</dbReference>
<dbReference type="Gene3D" id="3.40.630.10">
    <property type="entry name" value="Zn peptidases"/>
    <property type="match status" value="1"/>
</dbReference>
<dbReference type="InterPro" id="IPR001261">
    <property type="entry name" value="ArgE/DapE_CS"/>
</dbReference>
<dbReference type="InterPro" id="IPR036264">
    <property type="entry name" value="Bact_exopeptidase_dim_dom"/>
</dbReference>
<dbReference type="InterPro" id="IPR002933">
    <property type="entry name" value="Peptidase_M20"/>
</dbReference>
<dbReference type="InterPro" id="IPR011650">
    <property type="entry name" value="Peptidase_M20_dimer"/>
</dbReference>
<dbReference type="InterPro" id="IPR050072">
    <property type="entry name" value="Peptidase_M20A"/>
</dbReference>
<dbReference type="InterPro" id="IPR010174">
    <property type="entry name" value="Succinyl-DAP_deSuclase_DapE"/>
</dbReference>
<dbReference type="NCBIfam" id="TIGR01900">
    <property type="entry name" value="dapE-gram_pos"/>
    <property type="match status" value="1"/>
</dbReference>
<dbReference type="PANTHER" id="PTHR43808">
    <property type="entry name" value="ACETYLORNITHINE DEACETYLASE"/>
    <property type="match status" value="1"/>
</dbReference>
<dbReference type="PANTHER" id="PTHR43808:SF31">
    <property type="entry name" value="N-ACETYL-L-CITRULLINE DEACETYLASE"/>
    <property type="match status" value="1"/>
</dbReference>
<dbReference type="Pfam" id="PF07687">
    <property type="entry name" value="M20_dimer"/>
    <property type="match status" value="1"/>
</dbReference>
<dbReference type="Pfam" id="PF01546">
    <property type="entry name" value="Peptidase_M20"/>
    <property type="match status" value="1"/>
</dbReference>
<dbReference type="SUPFAM" id="SSF55031">
    <property type="entry name" value="Bacterial exopeptidase dimerisation domain"/>
    <property type="match status" value="1"/>
</dbReference>
<dbReference type="SUPFAM" id="SSF53187">
    <property type="entry name" value="Zn-dependent exopeptidases"/>
    <property type="match status" value="1"/>
</dbReference>
<dbReference type="PROSITE" id="PS00758">
    <property type="entry name" value="ARGE_DAPE_CPG2_1"/>
    <property type="match status" value="1"/>
</dbReference>
<reference key="1">
    <citation type="journal article" date="1994" name="Microbiology">
        <title>Analysis of different DNA fragments of Corynebacterium glutamicum complementing dapE of Escherichia coli.</title>
        <authorList>
            <person name="Wehrmann A."/>
            <person name="Eggeling L."/>
            <person name="Sahm H."/>
        </authorList>
    </citation>
    <scope>NUCLEOTIDE SEQUENCE [GENOMIC DNA]</scope>
    <source>
        <strain>ATCC 13032 / DSM 20300 / JCM 1318 / BCRC 11384 / CCUG 27702 / LMG 3730 / NBRC 12168 / NCIMB 10025 / NRRL B-2784 / 534</strain>
    </source>
</reference>
<reference key="2">
    <citation type="journal article" date="2003" name="Appl. Microbiol. Biotechnol.">
        <title>The Corynebacterium glutamicum genome: features and impacts on biotechnological processes.</title>
        <authorList>
            <person name="Ikeda M."/>
            <person name="Nakagawa S."/>
        </authorList>
    </citation>
    <scope>NUCLEOTIDE SEQUENCE [LARGE SCALE GENOMIC DNA]</scope>
    <source>
        <strain>ATCC 13032 / DSM 20300 / JCM 1318 / BCRC 11384 / CCUG 27702 / LMG 3730 / NBRC 12168 / NCIMB 10025 / NRRL B-2784 / 534</strain>
    </source>
</reference>
<reference key="3">
    <citation type="journal article" date="2003" name="J. Biotechnol.">
        <title>The complete Corynebacterium glutamicum ATCC 13032 genome sequence and its impact on the production of L-aspartate-derived amino acids and vitamins.</title>
        <authorList>
            <person name="Kalinowski J."/>
            <person name="Bathe B."/>
            <person name="Bartels D."/>
            <person name="Bischoff N."/>
            <person name="Bott M."/>
            <person name="Burkovski A."/>
            <person name="Dusch N."/>
            <person name="Eggeling L."/>
            <person name="Eikmanns B.J."/>
            <person name="Gaigalat L."/>
            <person name="Goesmann A."/>
            <person name="Hartmann M."/>
            <person name="Huthmacher K."/>
            <person name="Kraemer R."/>
            <person name="Linke B."/>
            <person name="McHardy A.C."/>
            <person name="Meyer F."/>
            <person name="Moeckel B."/>
            <person name="Pfefferle W."/>
            <person name="Puehler A."/>
            <person name="Rey D.A."/>
            <person name="Rueckert C."/>
            <person name="Rupp O."/>
            <person name="Sahm H."/>
            <person name="Wendisch V.F."/>
            <person name="Wiegraebe I."/>
            <person name="Tauch A."/>
        </authorList>
    </citation>
    <scope>NUCLEOTIDE SEQUENCE [LARGE SCALE GENOMIC DNA]</scope>
    <source>
        <strain>ATCC 13032 / DSM 20300 / JCM 1318 / BCRC 11384 / CCUG 27702 / LMG 3730 / NBRC 12168 / NCIMB 10025 / NRRL B-2784 / 534</strain>
    </source>
</reference>
<reference key="4">
    <citation type="journal article" date="1995" name="J. Bacteriol.">
        <title>Functional analysis of sequences adjacent to dapE of Corynebacterium glutamicum reveals the presence of aroP, which encodes the aromatic amino acid transporter.</title>
        <authorList>
            <person name="Wehrmann A."/>
            <person name="Morakkabati S."/>
            <person name="Kraemer R."/>
            <person name="Sahm H."/>
            <person name="Eggeling L."/>
        </authorList>
    </citation>
    <scope>NUCLEOTIDE SEQUENCE [GENOMIC DNA] OF 1-11</scope>
    <source>
        <strain>ATCC 13032 / DSM 20300 / JCM 1318 / BCRC 11384 / CCUG 27702 / LMG 3730 / NBRC 12168 / NCIMB 10025 / NRRL B-2784 / 534</strain>
    </source>
</reference>